<evidence type="ECO:0000255" key="1">
    <source>
        <dbReference type="HAMAP-Rule" id="MF_01301"/>
    </source>
</evidence>
<comment type="function">
    <text evidence="1">Involved in the transport of maltose and maltodextrins.</text>
</comment>
<comment type="catalytic activity">
    <reaction evidence="1">
        <text>beta-maltose(in) = beta-maltose(out)</text>
        <dbReference type="Rhea" id="RHEA:29731"/>
        <dbReference type="ChEBI" id="CHEBI:18147"/>
    </reaction>
</comment>
<comment type="subunit">
    <text evidence="1">Homotrimer formed of three 18-stranded antiparallel beta-barrels, containing three independent channels.</text>
</comment>
<comment type="subcellular location">
    <subcellularLocation>
        <location evidence="1">Cell outer membrane</location>
        <topology evidence="1">Multi-pass membrane protein</topology>
    </subcellularLocation>
</comment>
<comment type="induction">
    <text evidence="1">By maltose.</text>
</comment>
<comment type="similarity">
    <text evidence="1">Belongs to the porin LamB (TC 1.B.3) family.</text>
</comment>
<accession>A4SQI9</accession>
<protein>
    <recommendedName>
        <fullName evidence="1">Maltoporin 2</fullName>
    </recommendedName>
    <alternativeName>
        <fullName evidence="1">Maltose-inducible porin 2</fullName>
    </alternativeName>
</protein>
<reference key="1">
    <citation type="journal article" date="2008" name="BMC Genomics">
        <title>The genome of Aeromonas salmonicida subsp. salmonicida A449: insights into the evolution of a fish pathogen.</title>
        <authorList>
            <person name="Reith M.E."/>
            <person name="Singh R.K."/>
            <person name="Curtis B."/>
            <person name="Boyd J.M."/>
            <person name="Bouevitch A."/>
            <person name="Kimball J."/>
            <person name="Munholland J."/>
            <person name="Murphy C."/>
            <person name="Sarty D."/>
            <person name="Williams J."/>
            <person name="Nash J.H."/>
            <person name="Johnson S.C."/>
            <person name="Brown L.L."/>
        </authorList>
    </citation>
    <scope>NUCLEOTIDE SEQUENCE [LARGE SCALE GENOMIC DNA]</scope>
    <source>
        <strain>A449</strain>
    </source>
</reference>
<organism>
    <name type="scientific">Aeromonas salmonicida (strain A449)</name>
    <dbReference type="NCBI Taxonomy" id="382245"/>
    <lineage>
        <taxon>Bacteria</taxon>
        <taxon>Pseudomonadati</taxon>
        <taxon>Pseudomonadota</taxon>
        <taxon>Gammaproteobacteria</taxon>
        <taxon>Aeromonadales</taxon>
        <taxon>Aeromonadaceae</taxon>
        <taxon>Aeromonas</taxon>
    </lineage>
</organism>
<name>LAMB2_AERS4</name>
<sequence length="445" mass="48900">MKMKAKWLPIAAAVTAALASQAAFAVDFHGYFRSGVGVSTDGSMQTGLSDNAKQKVGRLGNEADTYGEIQLGSEVFNKDGKTFYVDSMVAMTSNGSNDWESTESKFQCTSANGTALDGCENKEDATFALRQFNVQAKGLLGFAPEATLWAGKRYYQRHDVHISDFYYWNISGAGAGIEGIQAGPGKVSFAWVRNDRSGTNDGWTYNDEMNVNTLDLRYAGIPLWQDGSLEVGVDYAIANPSDAQKDSANAQYKNAKDGVMLTAELTQGILGGFNKTVLQYGTEGYSKTFAFWGDGSWYGAEAKDGADGFRIINHGVIPMGNSWEMGHQLVYGVGNDMWDTNDKWETMSVVARPMYKWDDFNKTIFEGGYFKDKNKSTNGTSEEDAGYKLTLAQAWSAGSSFWARPEIRVFASYLAQDKKEMKGNAFNNGTADDTWNFGVQAEAWW</sequence>
<proteinExistence type="inferred from homology"/>
<keyword id="KW-0998">Cell outer membrane</keyword>
<keyword id="KW-0406">Ion transport</keyword>
<keyword id="KW-0472">Membrane</keyword>
<keyword id="KW-0626">Porin</keyword>
<keyword id="KW-0732">Signal</keyword>
<keyword id="KW-0762">Sugar transport</keyword>
<keyword id="KW-0812">Transmembrane</keyword>
<keyword id="KW-1134">Transmembrane beta strand</keyword>
<keyword id="KW-0813">Transport</keyword>
<feature type="signal peptide" evidence="1">
    <location>
        <begin position="1"/>
        <end position="25"/>
    </location>
</feature>
<feature type="chain" id="PRO_0000322010" description="Maltoporin 2">
    <location>
        <begin position="26"/>
        <end position="445"/>
    </location>
</feature>
<feature type="site" description="Greasy slide, important in sugar transport" evidence="1">
    <location>
        <position position="31"/>
    </location>
</feature>
<feature type="site" description="Greasy slide, important in sugar transport" evidence="1">
    <location>
        <position position="66"/>
    </location>
</feature>
<feature type="site" description="Greasy slide, important in sugar transport" evidence="1">
    <location>
        <position position="99"/>
    </location>
</feature>
<feature type="site" description="Important in sugar transport" evidence="1">
    <location>
        <position position="166"/>
    </location>
</feature>
<feature type="site" description="Greasy slide, important in sugar transport" evidence="1">
    <location>
        <position position="273"/>
    </location>
</feature>
<feature type="site" description="Greasy slide, important in sugar transport" evidence="1">
    <location>
        <position position="402"/>
    </location>
</feature>
<feature type="site" description="Greasy slide, important in sugar transport" evidence="1">
    <location>
        <position position="444"/>
    </location>
</feature>
<gene>
    <name evidence="1" type="primary">lamB2</name>
    <name type="ordered locus">ASA_3168</name>
</gene>
<dbReference type="EMBL" id="CP000644">
    <property type="protein sequence ID" value="ABO91161.1"/>
    <property type="molecule type" value="Genomic_DNA"/>
</dbReference>
<dbReference type="SMR" id="A4SQI9"/>
<dbReference type="STRING" id="29491.GCA_000820065_03548"/>
<dbReference type="KEGG" id="asa:ASA_3168"/>
<dbReference type="PATRIC" id="fig|382245.13.peg.3145"/>
<dbReference type="eggNOG" id="COG4580">
    <property type="taxonomic scope" value="Bacteria"/>
</dbReference>
<dbReference type="HOGENOM" id="CLU_032473_4_1_6"/>
<dbReference type="Proteomes" id="UP000000225">
    <property type="component" value="Chromosome"/>
</dbReference>
<dbReference type="GO" id="GO:0009279">
    <property type="term" value="C:cell outer membrane"/>
    <property type="evidence" value="ECO:0007669"/>
    <property type="project" value="UniProtKB-SubCell"/>
</dbReference>
<dbReference type="GO" id="GO:0046930">
    <property type="term" value="C:pore complex"/>
    <property type="evidence" value="ECO:0007669"/>
    <property type="project" value="UniProtKB-KW"/>
</dbReference>
<dbReference type="GO" id="GO:0042958">
    <property type="term" value="F:maltodextrin transmembrane transporter activity"/>
    <property type="evidence" value="ECO:0007669"/>
    <property type="project" value="InterPro"/>
</dbReference>
<dbReference type="GO" id="GO:0015481">
    <property type="term" value="F:maltose transporting porin activity"/>
    <property type="evidence" value="ECO:0007669"/>
    <property type="project" value="InterPro"/>
</dbReference>
<dbReference type="GO" id="GO:0006811">
    <property type="term" value="P:monoatomic ion transport"/>
    <property type="evidence" value="ECO:0007669"/>
    <property type="project" value="UniProtKB-KW"/>
</dbReference>
<dbReference type="CDD" id="cd01346">
    <property type="entry name" value="Maltoporin-like"/>
    <property type="match status" value="1"/>
</dbReference>
<dbReference type="Gene3D" id="2.40.170.10">
    <property type="entry name" value="Porin, LamB type"/>
    <property type="match status" value="1"/>
</dbReference>
<dbReference type="HAMAP" id="MF_01301">
    <property type="entry name" value="LamB"/>
    <property type="match status" value="1"/>
</dbReference>
<dbReference type="InterPro" id="IPR050286">
    <property type="entry name" value="G_neg_Bact_CarbUptk_Porin"/>
</dbReference>
<dbReference type="InterPro" id="IPR023738">
    <property type="entry name" value="Maltoporin"/>
</dbReference>
<dbReference type="InterPro" id="IPR003192">
    <property type="entry name" value="Porin_LamB"/>
</dbReference>
<dbReference type="InterPro" id="IPR036998">
    <property type="entry name" value="Porin_LamB_sf"/>
</dbReference>
<dbReference type="NCBIfam" id="NF006860">
    <property type="entry name" value="PRK09360.1"/>
    <property type="match status" value="1"/>
</dbReference>
<dbReference type="PANTHER" id="PTHR38762">
    <property type="entry name" value="CRYPTIC OUTER MEMBRANE PORIN BGLH-RELATED"/>
    <property type="match status" value="1"/>
</dbReference>
<dbReference type="PANTHER" id="PTHR38762:SF1">
    <property type="entry name" value="CRYPTIC OUTER MEMBRANE PORIN BGLH-RELATED"/>
    <property type="match status" value="1"/>
</dbReference>
<dbReference type="Pfam" id="PF02264">
    <property type="entry name" value="LamB"/>
    <property type="match status" value="1"/>
</dbReference>
<dbReference type="SUPFAM" id="SSF56935">
    <property type="entry name" value="Porins"/>
    <property type="match status" value="1"/>
</dbReference>